<name>FADA_VIBC3</name>
<reference key="1">
    <citation type="submission" date="2007-03" db="EMBL/GenBank/DDBJ databases">
        <authorList>
            <person name="Heidelberg J."/>
        </authorList>
    </citation>
    <scope>NUCLEOTIDE SEQUENCE [LARGE SCALE GENOMIC DNA]</scope>
    <source>
        <strain>ATCC 39541 / Classical Ogawa 395 / O395</strain>
    </source>
</reference>
<reference key="2">
    <citation type="journal article" date="2008" name="PLoS ONE">
        <title>A recalibrated molecular clock and independent origins for the cholera pandemic clones.</title>
        <authorList>
            <person name="Feng L."/>
            <person name="Reeves P.R."/>
            <person name="Lan R."/>
            <person name="Ren Y."/>
            <person name="Gao C."/>
            <person name="Zhou Z."/>
            <person name="Ren Y."/>
            <person name="Cheng J."/>
            <person name="Wang W."/>
            <person name="Wang J."/>
            <person name="Qian W."/>
            <person name="Li D."/>
            <person name="Wang L."/>
        </authorList>
    </citation>
    <scope>NUCLEOTIDE SEQUENCE [LARGE SCALE GENOMIC DNA]</scope>
    <source>
        <strain>ATCC 39541 / Classical Ogawa 395 / O395</strain>
    </source>
</reference>
<proteinExistence type="inferred from homology"/>
<dbReference type="EC" id="2.3.1.16" evidence="1"/>
<dbReference type="EMBL" id="CP000627">
    <property type="protein sequence ID" value="ABQ20531.1"/>
    <property type="molecule type" value="Genomic_DNA"/>
</dbReference>
<dbReference type="EMBL" id="CP001235">
    <property type="protein sequence ID" value="ACP08223.1"/>
    <property type="molecule type" value="Genomic_DNA"/>
</dbReference>
<dbReference type="RefSeq" id="WP_001099261.1">
    <property type="nucleotide sequence ID" value="NZ_JAACZH010000018.1"/>
</dbReference>
<dbReference type="SMR" id="A5F464"/>
<dbReference type="KEGG" id="vco:VC0395_A2533"/>
<dbReference type="KEGG" id="vcr:VC395_0196"/>
<dbReference type="PATRIC" id="fig|345073.21.peg.185"/>
<dbReference type="eggNOG" id="COG0183">
    <property type="taxonomic scope" value="Bacteria"/>
</dbReference>
<dbReference type="HOGENOM" id="CLU_031026_2_2_6"/>
<dbReference type="OrthoDB" id="8951704at2"/>
<dbReference type="UniPathway" id="UPA00659"/>
<dbReference type="Proteomes" id="UP000000249">
    <property type="component" value="Chromosome 2"/>
</dbReference>
<dbReference type="GO" id="GO:0005737">
    <property type="term" value="C:cytoplasm"/>
    <property type="evidence" value="ECO:0007669"/>
    <property type="project" value="UniProtKB-SubCell"/>
</dbReference>
<dbReference type="GO" id="GO:0003988">
    <property type="term" value="F:acetyl-CoA C-acyltransferase activity"/>
    <property type="evidence" value="ECO:0007669"/>
    <property type="project" value="UniProtKB-UniRule"/>
</dbReference>
<dbReference type="GO" id="GO:0006635">
    <property type="term" value="P:fatty acid beta-oxidation"/>
    <property type="evidence" value="ECO:0007669"/>
    <property type="project" value="UniProtKB-UniRule"/>
</dbReference>
<dbReference type="GO" id="GO:0010124">
    <property type="term" value="P:phenylacetate catabolic process"/>
    <property type="evidence" value="ECO:0007669"/>
    <property type="project" value="TreeGrafter"/>
</dbReference>
<dbReference type="CDD" id="cd00751">
    <property type="entry name" value="thiolase"/>
    <property type="match status" value="1"/>
</dbReference>
<dbReference type="FunFam" id="3.40.47.10:FF:000010">
    <property type="entry name" value="Acetyl-CoA acetyltransferase (Thiolase)"/>
    <property type="match status" value="1"/>
</dbReference>
<dbReference type="Gene3D" id="3.40.47.10">
    <property type="match status" value="2"/>
</dbReference>
<dbReference type="HAMAP" id="MF_01620">
    <property type="entry name" value="FadA"/>
    <property type="match status" value="1"/>
</dbReference>
<dbReference type="InterPro" id="IPR012805">
    <property type="entry name" value="FadA"/>
</dbReference>
<dbReference type="InterPro" id="IPR002155">
    <property type="entry name" value="Thiolase"/>
</dbReference>
<dbReference type="InterPro" id="IPR016039">
    <property type="entry name" value="Thiolase-like"/>
</dbReference>
<dbReference type="InterPro" id="IPR050215">
    <property type="entry name" value="Thiolase-like_sf_Thiolase"/>
</dbReference>
<dbReference type="InterPro" id="IPR020615">
    <property type="entry name" value="Thiolase_acyl_enz_int_AS"/>
</dbReference>
<dbReference type="InterPro" id="IPR020610">
    <property type="entry name" value="Thiolase_AS"/>
</dbReference>
<dbReference type="InterPro" id="IPR020617">
    <property type="entry name" value="Thiolase_C"/>
</dbReference>
<dbReference type="InterPro" id="IPR020613">
    <property type="entry name" value="Thiolase_CS"/>
</dbReference>
<dbReference type="InterPro" id="IPR020616">
    <property type="entry name" value="Thiolase_N"/>
</dbReference>
<dbReference type="NCBIfam" id="TIGR01930">
    <property type="entry name" value="AcCoA-C-Actrans"/>
    <property type="match status" value="1"/>
</dbReference>
<dbReference type="NCBIfam" id="TIGR02445">
    <property type="entry name" value="fadA"/>
    <property type="match status" value="1"/>
</dbReference>
<dbReference type="NCBIfam" id="NF006510">
    <property type="entry name" value="PRK08947.1"/>
    <property type="match status" value="1"/>
</dbReference>
<dbReference type="PANTHER" id="PTHR43853:SF11">
    <property type="entry name" value="3-KETOACYL-COA THIOLASE FADA"/>
    <property type="match status" value="1"/>
</dbReference>
<dbReference type="PANTHER" id="PTHR43853">
    <property type="entry name" value="3-KETOACYL-COA THIOLASE, PEROXISOMAL"/>
    <property type="match status" value="1"/>
</dbReference>
<dbReference type="Pfam" id="PF02803">
    <property type="entry name" value="Thiolase_C"/>
    <property type="match status" value="1"/>
</dbReference>
<dbReference type="Pfam" id="PF00108">
    <property type="entry name" value="Thiolase_N"/>
    <property type="match status" value="1"/>
</dbReference>
<dbReference type="PIRSF" id="PIRSF000429">
    <property type="entry name" value="Ac-CoA_Ac_transf"/>
    <property type="match status" value="1"/>
</dbReference>
<dbReference type="SUPFAM" id="SSF53901">
    <property type="entry name" value="Thiolase-like"/>
    <property type="match status" value="2"/>
</dbReference>
<dbReference type="PROSITE" id="PS00098">
    <property type="entry name" value="THIOLASE_1"/>
    <property type="match status" value="1"/>
</dbReference>
<dbReference type="PROSITE" id="PS00737">
    <property type="entry name" value="THIOLASE_2"/>
    <property type="match status" value="1"/>
</dbReference>
<dbReference type="PROSITE" id="PS00099">
    <property type="entry name" value="THIOLASE_3"/>
    <property type="match status" value="1"/>
</dbReference>
<accession>A5F464</accession>
<accession>C3M344</accession>
<keyword id="KW-0012">Acyltransferase</keyword>
<keyword id="KW-0963">Cytoplasm</keyword>
<keyword id="KW-0276">Fatty acid metabolism</keyword>
<keyword id="KW-0442">Lipid degradation</keyword>
<keyword id="KW-0443">Lipid metabolism</keyword>
<keyword id="KW-0808">Transferase</keyword>
<feature type="chain" id="PRO_0000323556" description="3-ketoacyl-CoA thiolase">
    <location>
        <begin position="1"/>
        <end position="387"/>
    </location>
</feature>
<feature type="active site" description="Acyl-thioester intermediate" evidence="1">
    <location>
        <position position="91"/>
    </location>
</feature>
<feature type="active site" description="Proton acceptor" evidence="1">
    <location>
        <position position="343"/>
    </location>
</feature>
<feature type="active site" description="Proton acceptor" evidence="1">
    <location>
        <position position="373"/>
    </location>
</feature>
<gene>
    <name evidence="1" type="primary">fadA</name>
    <name type="ordered locus">VC0395_A2533</name>
    <name type="ordered locus">VC395_0196</name>
</gene>
<protein>
    <recommendedName>
        <fullName evidence="1">3-ketoacyl-CoA thiolase</fullName>
        <ecNumber evidence="1">2.3.1.16</ecNumber>
    </recommendedName>
    <alternativeName>
        <fullName evidence="1">Acetyl-CoA acyltransferase</fullName>
    </alternativeName>
    <alternativeName>
        <fullName evidence="1">Beta-ketothiolase</fullName>
    </alternativeName>
    <alternativeName>
        <fullName evidence="1">Fatty acid oxidation complex subunit beta</fullName>
    </alternativeName>
</protein>
<organism>
    <name type="scientific">Vibrio cholerae serotype O1 (strain ATCC 39541 / Classical Ogawa 395 / O395)</name>
    <dbReference type="NCBI Taxonomy" id="345073"/>
    <lineage>
        <taxon>Bacteria</taxon>
        <taxon>Pseudomonadati</taxon>
        <taxon>Pseudomonadota</taxon>
        <taxon>Gammaproteobacteria</taxon>
        <taxon>Vibrionales</taxon>
        <taxon>Vibrionaceae</taxon>
        <taxon>Vibrio</taxon>
    </lineage>
</organism>
<sequence length="387" mass="40828">MNTVVIVDCLRTPMGRSKGGAFRHQRAEDLSAHLMKGILARNPQVNPKEIEDIYWGCVQQTLEQGFNVARNAALLAGLPIEIGAVTVNRLCGSSMQALHDAARAIMVGDAEICLVGGVEHMGHVPMTHGVDFHPGLSKNVAKAAGMMGLTAEMLGKLHGISRQQQDEFAARSHARAHAATLEGRFKNEILPTEGHAADGTLFTLDYDEVIRPETTVAGLAELRPVFDPANGTVTAGTSSALSDGASAMLVMSEQKAKALGLTIRARIKAMAVAGCDPSIMGYGPVPATHKALKRAGLTMQDMDVVELNEAFAAQSLPCAKDLGLLDMMDDKVNLNGGAIALGHPLGCSGTRISTTLINLMEAKDAKYGLATMCIGLGQGIATIFERP</sequence>
<comment type="function">
    <text evidence="1">Catalyzes the final step of fatty acid oxidation in which acetyl-CoA is released and the CoA ester of a fatty acid two carbons shorter is formed.</text>
</comment>
<comment type="catalytic activity">
    <reaction evidence="1">
        <text>an acyl-CoA + acetyl-CoA = a 3-oxoacyl-CoA + CoA</text>
        <dbReference type="Rhea" id="RHEA:21564"/>
        <dbReference type="ChEBI" id="CHEBI:57287"/>
        <dbReference type="ChEBI" id="CHEBI:57288"/>
        <dbReference type="ChEBI" id="CHEBI:58342"/>
        <dbReference type="ChEBI" id="CHEBI:90726"/>
        <dbReference type="EC" id="2.3.1.16"/>
    </reaction>
</comment>
<comment type="pathway">
    <text evidence="1">Lipid metabolism; fatty acid beta-oxidation.</text>
</comment>
<comment type="subunit">
    <text evidence="1">Heterotetramer of two alpha chains (FadB) and two beta chains (FadA).</text>
</comment>
<comment type="subcellular location">
    <subcellularLocation>
        <location evidence="1">Cytoplasm</location>
    </subcellularLocation>
</comment>
<comment type="similarity">
    <text evidence="1">Belongs to the thiolase-like superfamily. Thiolase family.</text>
</comment>
<evidence type="ECO:0000255" key="1">
    <source>
        <dbReference type="HAMAP-Rule" id="MF_01620"/>
    </source>
</evidence>